<proteinExistence type="inferred from homology"/>
<reference key="1">
    <citation type="submission" date="2007-07" db="EMBL/GenBank/DDBJ databases">
        <title>Complete sequence of chromosome of Xanthobacter autotrophicus Py2.</title>
        <authorList>
            <consortium name="US DOE Joint Genome Institute"/>
            <person name="Copeland A."/>
            <person name="Lucas S."/>
            <person name="Lapidus A."/>
            <person name="Barry K."/>
            <person name="Glavina del Rio T."/>
            <person name="Hammon N."/>
            <person name="Israni S."/>
            <person name="Dalin E."/>
            <person name="Tice H."/>
            <person name="Pitluck S."/>
            <person name="Sims D."/>
            <person name="Brettin T."/>
            <person name="Bruce D."/>
            <person name="Detter J.C."/>
            <person name="Han C."/>
            <person name="Tapia R."/>
            <person name="Brainard J."/>
            <person name="Schmutz J."/>
            <person name="Larimer F."/>
            <person name="Land M."/>
            <person name="Hauser L."/>
            <person name="Kyrpides N."/>
            <person name="Kim E."/>
            <person name="Ensigns S.A."/>
            <person name="Richardson P."/>
        </authorList>
    </citation>
    <scope>NUCLEOTIDE SEQUENCE [LARGE SCALE GENOMIC DNA]</scope>
    <source>
        <strain>ATCC BAA-1158 / Py2</strain>
    </source>
</reference>
<keyword id="KW-1185">Reference proteome</keyword>
<keyword id="KW-0687">Ribonucleoprotein</keyword>
<keyword id="KW-0689">Ribosomal protein</keyword>
<dbReference type="EMBL" id="CP000781">
    <property type="protein sequence ID" value="ABS69084.1"/>
    <property type="molecule type" value="Genomic_DNA"/>
</dbReference>
<dbReference type="SMR" id="A7IM41"/>
<dbReference type="STRING" id="78245.Xaut_3860"/>
<dbReference type="KEGG" id="xau:Xaut_3860"/>
<dbReference type="eggNOG" id="COG0267">
    <property type="taxonomic scope" value="Bacteria"/>
</dbReference>
<dbReference type="HOGENOM" id="CLU_190949_1_1_5"/>
<dbReference type="OrthoDB" id="21586at2"/>
<dbReference type="PhylomeDB" id="A7IM41"/>
<dbReference type="Proteomes" id="UP000002417">
    <property type="component" value="Chromosome"/>
</dbReference>
<dbReference type="GO" id="GO:0022625">
    <property type="term" value="C:cytosolic large ribosomal subunit"/>
    <property type="evidence" value="ECO:0007669"/>
    <property type="project" value="TreeGrafter"/>
</dbReference>
<dbReference type="GO" id="GO:0003735">
    <property type="term" value="F:structural constituent of ribosome"/>
    <property type="evidence" value="ECO:0007669"/>
    <property type="project" value="InterPro"/>
</dbReference>
<dbReference type="GO" id="GO:0006412">
    <property type="term" value="P:translation"/>
    <property type="evidence" value="ECO:0007669"/>
    <property type="project" value="UniProtKB-UniRule"/>
</dbReference>
<dbReference type="Gene3D" id="2.20.28.120">
    <property type="entry name" value="Ribosomal protein L33"/>
    <property type="match status" value="1"/>
</dbReference>
<dbReference type="HAMAP" id="MF_00294">
    <property type="entry name" value="Ribosomal_bL33"/>
    <property type="match status" value="1"/>
</dbReference>
<dbReference type="InterPro" id="IPR001705">
    <property type="entry name" value="Ribosomal_bL33"/>
</dbReference>
<dbReference type="InterPro" id="IPR018264">
    <property type="entry name" value="Ribosomal_bL33_CS"/>
</dbReference>
<dbReference type="InterPro" id="IPR038584">
    <property type="entry name" value="Ribosomal_bL33_sf"/>
</dbReference>
<dbReference type="InterPro" id="IPR011332">
    <property type="entry name" value="Ribosomal_zn-bd"/>
</dbReference>
<dbReference type="NCBIfam" id="NF001860">
    <property type="entry name" value="PRK00595.1"/>
    <property type="match status" value="1"/>
</dbReference>
<dbReference type="NCBIfam" id="TIGR01023">
    <property type="entry name" value="rpmG_bact"/>
    <property type="match status" value="1"/>
</dbReference>
<dbReference type="PANTHER" id="PTHR15238">
    <property type="entry name" value="54S RIBOSOMAL PROTEIN L39, MITOCHONDRIAL"/>
    <property type="match status" value="1"/>
</dbReference>
<dbReference type="PANTHER" id="PTHR15238:SF1">
    <property type="entry name" value="LARGE RIBOSOMAL SUBUNIT PROTEIN BL33M"/>
    <property type="match status" value="1"/>
</dbReference>
<dbReference type="Pfam" id="PF00471">
    <property type="entry name" value="Ribosomal_L33"/>
    <property type="match status" value="1"/>
</dbReference>
<dbReference type="SUPFAM" id="SSF57829">
    <property type="entry name" value="Zn-binding ribosomal proteins"/>
    <property type="match status" value="1"/>
</dbReference>
<dbReference type="PROSITE" id="PS00582">
    <property type="entry name" value="RIBOSOMAL_L33"/>
    <property type="match status" value="1"/>
</dbReference>
<feature type="chain" id="PRO_1000115167" description="Large ribosomal subunit protein bL33">
    <location>
        <begin position="1"/>
        <end position="55"/>
    </location>
</feature>
<organism>
    <name type="scientific">Xanthobacter autotrophicus (strain ATCC BAA-1158 / Py2)</name>
    <dbReference type="NCBI Taxonomy" id="78245"/>
    <lineage>
        <taxon>Bacteria</taxon>
        <taxon>Pseudomonadati</taxon>
        <taxon>Pseudomonadota</taxon>
        <taxon>Alphaproteobacteria</taxon>
        <taxon>Hyphomicrobiales</taxon>
        <taxon>Xanthobacteraceae</taxon>
        <taxon>Xanthobacter</taxon>
    </lineage>
</organism>
<sequence>MAKAATIKIKLLSSADTGVFYVTKKNSRTKTDKIVLKKYDPVVRKHVEFRETKIK</sequence>
<accession>A7IM41</accession>
<protein>
    <recommendedName>
        <fullName evidence="1">Large ribosomal subunit protein bL33</fullName>
    </recommendedName>
    <alternativeName>
        <fullName evidence="2">50S ribosomal protein L33</fullName>
    </alternativeName>
</protein>
<name>RL33_XANP2</name>
<evidence type="ECO:0000255" key="1">
    <source>
        <dbReference type="HAMAP-Rule" id="MF_00294"/>
    </source>
</evidence>
<evidence type="ECO:0000305" key="2"/>
<gene>
    <name evidence="1" type="primary">rpmG</name>
    <name type="ordered locus">Xaut_3860</name>
</gene>
<comment type="similarity">
    <text evidence="1">Belongs to the bacterial ribosomal protein bL33 family.</text>
</comment>